<organism>
    <name type="scientific">Escherichia coli O157:H7 (strain EC4115 / EHEC)</name>
    <dbReference type="NCBI Taxonomy" id="444450"/>
    <lineage>
        <taxon>Bacteria</taxon>
        <taxon>Pseudomonadati</taxon>
        <taxon>Pseudomonadota</taxon>
        <taxon>Gammaproteobacteria</taxon>
        <taxon>Enterobacterales</taxon>
        <taxon>Enterobacteriaceae</taxon>
        <taxon>Escherichia</taxon>
    </lineage>
</organism>
<comment type="similarity">
    <text evidence="1">Belongs to the bacterial ribosomal protein bS21 family.</text>
</comment>
<protein>
    <recommendedName>
        <fullName evidence="1">Small ribosomal subunit protein bS21</fullName>
    </recommendedName>
    <alternativeName>
        <fullName evidence="3">30S ribosomal protein S21</fullName>
    </alternativeName>
</protein>
<proteinExistence type="inferred from homology"/>
<accession>B5YRA5</accession>
<dbReference type="EMBL" id="CP001164">
    <property type="protein sequence ID" value="ACI35001.1"/>
    <property type="molecule type" value="Genomic_DNA"/>
</dbReference>
<dbReference type="RefSeq" id="WP_001144069.1">
    <property type="nucleotide sequence ID" value="NC_011353.1"/>
</dbReference>
<dbReference type="SMR" id="B5YRA5"/>
<dbReference type="GeneID" id="98390195"/>
<dbReference type="KEGG" id="ecf:ECH74115_4377"/>
<dbReference type="HOGENOM" id="CLU_159258_1_0_6"/>
<dbReference type="GO" id="GO:1990904">
    <property type="term" value="C:ribonucleoprotein complex"/>
    <property type="evidence" value="ECO:0007669"/>
    <property type="project" value="UniProtKB-KW"/>
</dbReference>
<dbReference type="GO" id="GO:0005840">
    <property type="term" value="C:ribosome"/>
    <property type="evidence" value="ECO:0007669"/>
    <property type="project" value="UniProtKB-KW"/>
</dbReference>
<dbReference type="GO" id="GO:0003735">
    <property type="term" value="F:structural constituent of ribosome"/>
    <property type="evidence" value="ECO:0007669"/>
    <property type="project" value="InterPro"/>
</dbReference>
<dbReference type="GO" id="GO:0006412">
    <property type="term" value="P:translation"/>
    <property type="evidence" value="ECO:0007669"/>
    <property type="project" value="UniProtKB-UniRule"/>
</dbReference>
<dbReference type="FunFam" id="1.20.5.1150:FF:000001">
    <property type="entry name" value="30S ribosomal protein S21"/>
    <property type="match status" value="1"/>
</dbReference>
<dbReference type="Gene3D" id="1.20.5.1150">
    <property type="entry name" value="Ribosomal protein S8"/>
    <property type="match status" value="1"/>
</dbReference>
<dbReference type="HAMAP" id="MF_00358">
    <property type="entry name" value="Ribosomal_bS21"/>
    <property type="match status" value="1"/>
</dbReference>
<dbReference type="InterPro" id="IPR001911">
    <property type="entry name" value="Ribosomal_bS21"/>
</dbReference>
<dbReference type="InterPro" id="IPR018278">
    <property type="entry name" value="Ribosomal_bS21_CS"/>
</dbReference>
<dbReference type="InterPro" id="IPR038380">
    <property type="entry name" value="Ribosomal_bS21_sf"/>
</dbReference>
<dbReference type="NCBIfam" id="TIGR00030">
    <property type="entry name" value="S21p"/>
    <property type="match status" value="1"/>
</dbReference>
<dbReference type="PANTHER" id="PTHR21109">
    <property type="entry name" value="MITOCHONDRIAL 28S RIBOSOMAL PROTEIN S21"/>
    <property type="match status" value="1"/>
</dbReference>
<dbReference type="PANTHER" id="PTHR21109:SF22">
    <property type="entry name" value="SMALL RIBOSOMAL SUBUNIT PROTEIN BS21"/>
    <property type="match status" value="1"/>
</dbReference>
<dbReference type="Pfam" id="PF01165">
    <property type="entry name" value="Ribosomal_S21"/>
    <property type="match status" value="1"/>
</dbReference>
<dbReference type="PRINTS" id="PR00976">
    <property type="entry name" value="RIBOSOMALS21"/>
</dbReference>
<dbReference type="PROSITE" id="PS01181">
    <property type="entry name" value="RIBOSOMAL_S21"/>
    <property type="match status" value="1"/>
</dbReference>
<evidence type="ECO:0000255" key="1">
    <source>
        <dbReference type="HAMAP-Rule" id="MF_00358"/>
    </source>
</evidence>
<evidence type="ECO:0000256" key="2">
    <source>
        <dbReference type="SAM" id="MobiDB-lite"/>
    </source>
</evidence>
<evidence type="ECO:0000305" key="3"/>
<name>RS21_ECO5E</name>
<feature type="chain" id="PRO_1000120613" description="Small ribosomal subunit protein bS21">
    <location>
        <begin position="1"/>
        <end position="71"/>
    </location>
</feature>
<feature type="region of interest" description="Disordered" evidence="2">
    <location>
        <begin position="43"/>
        <end position="71"/>
    </location>
</feature>
<feature type="compositionally biased region" description="Basic residues" evidence="2">
    <location>
        <begin position="46"/>
        <end position="59"/>
    </location>
</feature>
<feature type="compositionally biased region" description="Basic and acidic residues" evidence="2">
    <location>
        <begin position="60"/>
        <end position="71"/>
    </location>
</feature>
<keyword id="KW-0687">Ribonucleoprotein</keyword>
<keyword id="KW-0689">Ribosomal protein</keyword>
<sequence>MPVIKVRENEPFDVALRRFKRSCEKAGVLAEVRRREFYEKPTTERKRAKASAVKRHAKKLARENARRTRLY</sequence>
<reference key="1">
    <citation type="journal article" date="2011" name="Proc. Natl. Acad. Sci. U.S.A.">
        <title>Genomic anatomy of Escherichia coli O157:H7 outbreaks.</title>
        <authorList>
            <person name="Eppinger M."/>
            <person name="Mammel M.K."/>
            <person name="Leclerc J.E."/>
            <person name="Ravel J."/>
            <person name="Cebula T.A."/>
        </authorList>
    </citation>
    <scope>NUCLEOTIDE SEQUENCE [LARGE SCALE GENOMIC DNA]</scope>
    <source>
        <strain>EC4115 / EHEC</strain>
    </source>
</reference>
<gene>
    <name evidence="1" type="primary">rpsU</name>
    <name type="ordered locus">ECH74115_4377</name>
</gene>